<accession>P9WLG6</accession>
<accession>L0T987</accession>
<accession>Q10522</accession>
<name>Y2240_MYCTO</name>
<protein>
    <recommendedName>
        <fullName>Uncharacterized protein MT2300</fullName>
    </recommendedName>
</protein>
<evidence type="ECO:0000255" key="1"/>
<evidence type="ECO:0000305" key="2"/>
<keyword id="KW-0472">Membrane</keyword>
<keyword id="KW-1185">Reference proteome</keyword>
<keyword id="KW-0812">Transmembrane</keyword>
<keyword id="KW-1133">Transmembrane helix</keyword>
<sequence length="196" mass="20084">MLIGWRAVPRRHGGELPRRGALALGCIALLLMGIVGCTTVTDGTAMPDTNVAPAYRSSVSASVSASAATSSIRESQRQQSLTTKAIRTSCDALAATSKDAIDKVNAYVAAFNQGRNTGPTEGPAIDALNNSASTVSGSLSAALSAQLGDALNAYVDAARAVANAIGAHASTAEFNRRVDRLNDTKTKALTMCVAAF</sequence>
<proteinExistence type="predicted"/>
<comment type="subcellular location">
    <subcellularLocation>
        <location evidence="2">Membrane</location>
        <topology evidence="2">Single-pass membrane protein</topology>
    </subcellularLocation>
</comment>
<comment type="sequence caution" evidence="2">
    <conflict type="erroneous initiation">
        <sequence resource="EMBL-CDS" id="AAK46584"/>
    </conflict>
    <text>Extended N-terminus.</text>
</comment>
<feature type="chain" id="PRO_0000427482" description="Uncharacterized protein MT2300">
    <location>
        <begin position="1"/>
        <end position="196"/>
    </location>
</feature>
<feature type="transmembrane region" description="Helical" evidence="1">
    <location>
        <begin position="20"/>
        <end position="40"/>
    </location>
</feature>
<gene>
    <name type="ordered locus">MT2300</name>
</gene>
<dbReference type="EMBL" id="AE000516">
    <property type="protein sequence ID" value="AAK46584.1"/>
    <property type="status" value="ALT_INIT"/>
    <property type="molecule type" value="Genomic_DNA"/>
</dbReference>
<dbReference type="PIR" id="D70778">
    <property type="entry name" value="D70778"/>
</dbReference>
<dbReference type="RefSeq" id="WP_003911826.1">
    <property type="nucleotide sequence ID" value="NZ_KK341227.1"/>
</dbReference>
<dbReference type="SMR" id="P9WLG6"/>
<dbReference type="KEGG" id="mtc:MT2300"/>
<dbReference type="PATRIC" id="fig|83331.31.peg.2477"/>
<dbReference type="HOGENOM" id="CLU_100952_0_0_11"/>
<dbReference type="Proteomes" id="UP000001020">
    <property type="component" value="Chromosome"/>
</dbReference>
<dbReference type="GO" id="GO:0016020">
    <property type="term" value="C:membrane"/>
    <property type="evidence" value="ECO:0007669"/>
    <property type="project" value="UniProtKB-SubCell"/>
</dbReference>
<organism>
    <name type="scientific">Mycobacterium tuberculosis (strain CDC 1551 / Oshkosh)</name>
    <dbReference type="NCBI Taxonomy" id="83331"/>
    <lineage>
        <taxon>Bacteria</taxon>
        <taxon>Bacillati</taxon>
        <taxon>Actinomycetota</taxon>
        <taxon>Actinomycetes</taxon>
        <taxon>Mycobacteriales</taxon>
        <taxon>Mycobacteriaceae</taxon>
        <taxon>Mycobacterium</taxon>
        <taxon>Mycobacterium tuberculosis complex</taxon>
    </lineage>
</organism>
<reference key="1">
    <citation type="journal article" date="2002" name="J. Bacteriol.">
        <title>Whole-genome comparison of Mycobacterium tuberculosis clinical and laboratory strains.</title>
        <authorList>
            <person name="Fleischmann R.D."/>
            <person name="Alland D."/>
            <person name="Eisen J.A."/>
            <person name="Carpenter L."/>
            <person name="White O."/>
            <person name="Peterson J.D."/>
            <person name="DeBoy R.T."/>
            <person name="Dodson R.J."/>
            <person name="Gwinn M.L."/>
            <person name="Haft D.H."/>
            <person name="Hickey E.K."/>
            <person name="Kolonay J.F."/>
            <person name="Nelson W.C."/>
            <person name="Umayam L.A."/>
            <person name="Ermolaeva M.D."/>
            <person name="Salzberg S.L."/>
            <person name="Delcher A."/>
            <person name="Utterback T.R."/>
            <person name="Weidman J.F."/>
            <person name="Khouri H.M."/>
            <person name="Gill J."/>
            <person name="Mikula A."/>
            <person name="Bishai W."/>
            <person name="Jacobs W.R. Jr."/>
            <person name="Venter J.C."/>
            <person name="Fraser C.M."/>
        </authorList>
    </citation>
    <scope>NUCLEOTIDE SEQUENCE [LARGE SCALE GENOMIC DNA]</scope>
    <source>
        <strain>CDC 1551 / Oshkosh</strain>
    </source>
</reference>